<keyword id="KW-0997">Cell inner membrane</keyword>
<keyword id="KW-1003">Cell membrane</keyword>
<keyword id="KW-0472">Membrane</keyword>
<keyword id="KW-0598">Phosphotransferase system</keyword>
<keyword id="KW-1185">Reference proteome</keyword>
<keyword id="KW-0762">Sugar transport</keyword>
<keyword id="KW-0812">Transmembrane</keyword>
<keyword id="KW-1133">Transmembrane helix</keyword>
<keyword id="KW-0813">Transport</keyword>
<feature type="chain" id="PRO_0000186660" description="N-acetylgalactosamine permease IIC component 1">
    <location>
        <begin position="1"/>
        <end position="267"/>
    </location>
</feature>
<feature type="topological domain" description="Periplasmic" evidence="1">
    <location>
        <begin position="1"/>
        <end position="10"/>
    </location>
</feature>
<feature type="transmembrane region" description="Helical" evidence="2">
    <location>
        <begin position="11"/>
        <end position="31"/>
    </location>
</feature>
<feature type="topological domain" description="Cytoplasmic" evidence="1">
    <location>
        <begin position="32"/>
        <end position="33"/>
    </location>
</feature>
<feature type="transmembrane region" description="Helical" evidence="2">
    <location>
        <begin position="34"/>
        <end position="54"/>
    </location>
</feature>
<feature type="topological domain" description="Periplasmic" evidence="1">
    <location>
        <begin position="55"/>
        <end position="66"/>
    </location>
</feature>
<feature type="transmembrane region" description="Helical" evidence="2">
    <location>
        <begin position="67"/>
        <end position="87"/>
    </location>
</feature>
<feature type="topological domain" description="Cytoplasmic" evidence="1">
    <location>
        <begin position="88"/>
        <end position="94"/>
    </location>
</feature>
<feature type="transmembrane region" description="Helical" evidence="2">
    <location>
        <begin position="95"/>
        <end position="115"/>
    </location>
</feature>
<feature type="topological domain" description="Periplasmic" evidence="1">
    <location>
        <begin position="116"/>
        <end position="141"/>
    </location>
</feature>
<feature type="transmembrane region" description="Helical" evidence="2">
    <location>
        <begin position="142"/>
        <end position="162"/>
    </location>
</feature>
<feature type="topological domain" description="Cytoplasmic" evidence="1">
    <location>
        <begin position="163"/>
        <end position="177"/>
    </location>
</feature>
<feature type="transmembrane region" description="Helical" evidence="2">
    <location>
        <begin position="178"/>
        <end position="198"/>
    </location>
</feature>
<feature type="topological domain" description="Periplasmic" evidence="1">
    <location>
        <begin position="199"/>
        <end position="209"/>
    </location>
</feature>
<feature type="transmembrane region" description="Helical" evidence="2">
    <location>
        <begin position="210"/>
        <end position="230"/>
    </location>
</feature>
<feature type="topological domain" description="Cytoplasmic" evidence="1">
    <location>
        <begin position="231"/>
        <end position="267"/>
    </location>
</feature>
<feature type="domain" description="PTS EIIC type-4" evidence="2">
    <location>
        <begin position="1"/>
        <end position="237"/>
    </location>
</feature>
<reference key="1">
    <citation type="journal article" date="1997" name="Science">
        <title>The complete genome sequence of Escherichia coli K-12.</title>
        <authorList>
            <person name="Blattner F.R."/>
            <person name="Plunkett G. III"/>
            <person name="Bloch C.A."/>
            <person name="Perna N.T."/>
            <person name="Burland V."/>
            <person name="Riley M."/>
            <person name="Collado-Vides J."/>
            <person name="Glasner J.D."/>
            <person name="Rode C.K."/>
            <person name="Mayhew G.F."/>
            <person name="Gregor J."/>
            <person name="Davis N.W."/>
            <person name="Kirkpatrick H.A."/>
            <person name="Goeden M.A."/>
            <person name="Rose D.J."/>
            <person name="Mau B."/>
            <person name="Shao Y."/>
        </authorList>
    </citation>
    <scope>NUCLEOTIDE SEQUENCE [LARGE SCALE GENOMIC DNA]</scope>
    <source>
        <strain>K12 / MG1655 / ATCC 47076</strain>
    </source>
</reference>
<reference key="2">
    <citation type="journal article" date="2006" name="Mol. Syst. Biol.">
        <title>Highly accurate genome sequences of Escherichia coli K-12 strains MG1655 and W3110.</title>
        <authorList>
            <person name="Hayashi K."/>
            <person name="Morooka N."/>
            <person name="Yamamoto Y."/>
            <person name="Fujita K."/>
            <person name="Isono K."/>
            <person name="Choi S."/>
            <person name="Ohtsubo E."/>
            <person name="Baba T."/>
            <person name="Wanner B.L."/>
            <person name="Mori H."/>
            <person name="Horiuchi T."/>
        </authorList>
    </citation>
    <scope>NUCLEOTIDE SEQUENCE [LARGE SCALE GENOMIC DNA]</scope>
    <source>
        <strain>K12 / W3110 / ATCC 27325 / DSM 5911</strain>
    </source>
</reference>
<reference key="3">
    <citation type="journal article" date="1996" name="Microbiology">
        <title>Novel phosphotransferase genes revealed by bacterial genome sequencing: a gene cluster encoding a putative N-acetylgalactosamine metabolic pathway in Escherichia coli.</title>
        <authorList>
            <person name="Reizer J."/>
            <person name="Ramseier T.M."/>
            <person name="Reizer A."/>
            <person name="Charbit A."/>
            <person name="Saier M.H. Jr."/>
        </authorList>
    </citation>
    <scope>DISCUSSION OF SEQUENCE</scope>
</reference>
<reference key="4">
    <citation type="journal article" date="2005" name="Science">
        <title>Global topology analysis of the Escherichia coli inner membrane proteome.</title>
        <authorList>
            <person name="Daley D.O."/>
            <person name="Rapp M."/>
            <person name="Granseth E."/>
            <person name="Melen K."/>
            <person name="Drew D."/>
            <person name="von Heijne G."/>
        </authorList>
    </citation>
    <scope>TOPOLOGY [LARGE SCALE ANALYSIS]</scope>
    <source>
        <strain>K12 / MG1655 / ATCC 47076</strain>
    </source>
</reference>
<name>PTPC1_ECOLI</name>
<evidence type="ECO:0000255" key="1"/>
<evidence type="ECO:0000255" key="2">
    <source>
        <dbReference type="PROSITE-ProRule" id="PRU00429"/>
    </source>
</evidence>
<proteinExistence type="evidence at protein level"/>
<protein>
    <recommendedName>
        <fullName>N-acetylgalactosamine permease IIC component 1</fullName>
    </recommendedName>
    <alternativeName>
        <fullName>EIIC-Aga</fullName>
    </alternativeName>
    <alternativeName>
        <fullName>PTS system N-acetylgalactosamine-specific EIIC component 1</fullName>
    </alternativeName>
</protein>
<sequence length="267" mass="28645">MHEITLLQGLSLAALVFVLGIDFWLEALFLFRPIIVCTLTGAILGDIQTGLITGGLTELAFAGLTPAGGVQPPNPIMAGLMTTVIAWSTGVDAKTAIGLGLPFSLLMQYVILFFYSAFSLFMTKADKCAKEADTAAFSRLNWTTMLIVASAYAVIAFLCTYLAQGAMQALVKAMPAWLTHGFEVAGGILPAVGFGLLLRVMFKAQYIPYLIAGFLFVCYIQVSNLLPVAVLGAGFAVYEFFNAKSRQQAQPQPVASKNEEEDYSNGI</sequence>
<accession>P42910</accession>
<accession>Q2M971</accession>
<organism>
    <name type="scientific">Escherichia coli (strain K12)</name>
    <dbReference type="NCBI Taxonomy" id="83333"/>
    <lineage>
        <taxon>Bacteria</taxon>
        <taxon>Pseudomonadati</taxon>
        <taxon>Pseudomonadota</taxon>
        <taxon>Gammaproteobacteria</taxon>
        <taxon>Enterobacterales</taxon>
        <taxon>Enterobacteriaceae</taxon>
        <taxon>Escherichia</taxon>
    </lineage>
</organism>
<gene>
    <name type="primary">agaC</name>
    <name type="synonym">yraE</name>
    <name type="ordered locus">b3139</name>
    <name type="ordered locus">JW3108</name>
</gene>
<dbReference type="EMBL" id="U18997">
    <property type="protein sequence ID" value="AAA57942.1"/>
    <property type="molecule type" value="Genomic_DNA"/>
</dbReference>
<dbReference type="EMBL" id="U00096">
    <property type="protein sequence ID" value="AAC76173.1"/>
    <property type="molecule type" value="Genomic_DNA"/>
</dbReference>
<dbReference type="EMBL" id="AP009048">
    <property type="protein sequence ID" value="BAE77185.1"/>
    <property type="molecule type" value="Genomic_DNA"/>
</dbReference>
<dbReference type="PIR" id="G65103">
    <property type="entry name" value="G65103"/>
</dbReference>
<dbReference type="RefSeq" id="NP_417608.1">
    <property type="nucleotide sequence ID" value="NC_000913.3"/>
</dbReference>
<dbReference type="RefSeq" id="WP_000544489.1">
    <property type="nucleotide sequence ID" value="NZ_STEB01000001.1"/>
</dbReference>
<dbReference type="SMR" id="P42910"/>
<dbReference type="BioGRID" id="4262422">
    <property type="interactions" value="14"/>
</dbReference>
<dbReference type="FunCoup" id="P42910">
    <property type="interactions" value="114"/>
</dbReference>
<dbReference type="STRING" id="511145.b3139"/>
<dbReference type="PaxDb" id="511145-b3139"/>
<dbReference type="EnsemblBacteria" id="AAC76173">
    <property type="protein sequence ID" value="AAC76173"/>
    <property type="gene ID" value="b3139"/>
</dbReference>
<dbReference type="GeneID" id="75203743"/>
<dbReference type="GeneID" id="947652"/>
<dbReference type="KEGG" id="ecj:JW3108"/>
<dbReference type="KEGG" id="eco:b3139"/>
<dbReference type="KEGG" id="ecoc:C3026_17105"/>
<dbReference type="PATRIC" id="fig|1411691.4.peg.3591"/>
<dbReference type="EchoBASE" id="EB2623"/>
<dbReference type="eggNOG" id="COG3715">
    <property type="taxonomic scope" value="Bacteria"/>
</dbReference>
<dbReference type="HOGENOM" id="CLU_069101_2_1_6"/>
<dbReference type="InParanoid" id="P42910"/>
<dbReference type="OMA" id="GGAQMGD"/>
<dbReference type="OrthoDB" id="3190125at2"/>
<dbReference type="PhylomeDB" id="P42910"/>
<dbReference type="BioCyc" id="EcoCyc:AGAC-MONOMER"/>
<dbReference type="PRO" id="PR:P42910"/>
<dbReference type="Proteomes" id="UP000000625">
    <property type="component" value="Chromosome"/>
</dbReference>
<dbReference type="GO" id="GO:0005886">
    <property type="term" value="C:plasma membrane"/>
    <property type="evidence" value="ECO:0000314"/>
    <property type="project" value="EcoCyc"/>
</dbReference>
<dbReference type="GO" id="GO:0009401">
    <property type="term" value="P:phosphoenolpyruvate-dependent sugar phosphotransferase system"/>
    <property type="evidence" value="ECO:0000318"/>
    <property type="project" value="GO_Central"/>
</dbReference>
<dbReference type="InterPro" id="IPR050303">
    <property type="entry name" value="GatZ_KbaZ_carbometab"/>
</dbReference>
<dbReference type="InterPro" id="IPR004700">
    <property type="entry name" value="PTS_IIC_man"/>
</dbReference>
<dbReference type="NCBIfam" id="TIGR00822">
    <property type="entry name" value="EII-Sor"/>
    <property type="match status" value="1"/>
</dbReference>
<dbReference type="NCBIfam" id="NF007289">
    <property type="entry name" value="PRK09757.1"/>
    <property type="match status" value="1"/>
</dbReference>
<dbReference type="PANTHER" id="PTHR32502">
    <property type="entry name" value="N-ACETYLGALACTOSAMINE PERMEASE II COMPONENT-RELATED"/>
    <property type="match status" value="1"/>
</dbReference>
<dbReference type="PANTHER" id="PTHR32502:SF8">
    <property type="entry name" value="N-ACETYLGALACTOSAMINE PERMEASE IIC COMPONENT 1"/>
    <property type="match status" value="1"/>
</dbReference>
<dbReference type="Pfam" id="PF03609">
    <property type="entry name" value="EII-Sor"/>
    <property type="match status" value="1"/>
</dbReference>
<dbReference type="PROSITE" id="PS51106">
    <property type="entry name" value="PTS_EIIC_TYPE_4"/>
    <property type="match status" value="1"/>
</dbReference>
<comment type="function">
    <text>The phosphoenolpyruvate-dependent sugar phosphotransferase system (PTS), a major carbohydrate active -transport system, catalyzes the phosphorylation of incoming sugar substrates concomitant with their translocation across the cell membrane. This system is involved in N-acetylgalactosamine transport.</text>
</comment>
<comment type="subcellular location">
    <subcellularLocation>
        <location>Cell inner membrane</location>
        <topology>Multi-pass membrane protein</topology>
    </subcellularLocation>
</comment>
<comment type="domain">
    <text>The EIIC domain forms the PTS system translocation channel and contains the specific substrate-binding site.</text>
</comment>